<keyword id="KW-0067">ATP-binding</keyword>
<keyword id="KW-0963">Cytoplasm</keyword>
<keyword id="KW-0418">Kinase</keyword>
<keyword id="KW-0547">Nucleotide-binding</keyword>
<keyword id="KW-0808">Transferase</keyword>
<accession>B4TNH9</accession>
<name>URK_SALSV</name>
<reference key="1">
    <citation type="journal article" date="2011" name="J. Bacteriol.">
        <title>Comparative genomics of 28 Salmonella enterica isolates: evidence for CRISPR-mediated adaptive sublineage evolution.</title>
        <authorList>
            <person name="Fricke W.F."/>
            <person name="Mammel M.K."/>
            <person name="McDermott P.F."/>
            <person name="Tartera C."/>
            <person name="White D.G."/>
            <person name="Leclerc J.E."/>
            <person name="Ravel J."/>
            <person name="Cebula T.A."/>
        </authorList>
    </citation>
    <scope>NUCLEOTIDE SEQUENCE [LARGE SCALE GENOMIC DNA]</scope>
    <source>
        <strain>CVM19633</strain>
    </source>
</reference>
<evidence type="ECO:0000255" key="1">
    <source>
        <dbReference type="HAMAP-Rule" id="MF_00551"/>
    </source>
</evidence>
<feature type="chain" id="PRO_1000129088" description="Uridine kinase">
    <location>
        <begin position="1"/>
        <end position="213"/>
    </location>
</feature>
<feature type="binding site" evidence="1">
    <location>
        <begin position="15"/>
        <end position="22"/>
    </location>
    <ligand>
        <name>ATP</name>
        <dbReference type="ChEBI" id="CHEBI:30616"/>
    </ligand>
</feature>
<sequence>MTDQSHQCVIIGIAGASASGKSLIASTLYRELREQVGDEHIGVIPEDSYYKDQSHLSMEERVKTNYDHPNAMDHSLLFQHLQALKRGSAIELPVYSYVEHTRMQETVRVEPKKVIILEGILLLTDARLREEMNFSIFVDTPLDICLMRRIKRDVNERGRSMDSVMAQYQKTVRPMFLQFIEPSKQYADIIVPRGGKNRIAIDILKAKISQFFE</sequence>
<comment type="catalytic activity">
    <reaction evidence="1">
        <text>uridine + ATP = UMP + ADP + H(+)</text>
        <dbReference type="Rhea" id="RHEA:16825"/>
        <dbReference type="ChEBI" id="CHEBI:15378"/>
        <dbReference type="ChEBI" id="CHEBI:16704"/>
        <dbReference type="ChEBI" id="CHEBI:30616"/>
        <dbReference type="ChEBI" id="CHEBI:57865"/>
        <dbReference type="ChEBI" id="CHEBI:456216"/>
        <dbReference type="EC" id="2.7.1.48"/>
    </reaction>
</comment>
<comment type="catalytic activity">
    <reaction evidence="1">
        <text>cytidine + ATP = CMP + ADP + H(+)</text>
        <dbReference type="Rhea" id="RHEA:24674"/>
        <dbReference type="ChEBI" id="CHEBI:15378"/>
        <dbReference type="ChEBI" id="CHEBI:17562"/>
        <dbReference type="ChEBI" id="CHEBI:30616"/>
        <dbReference type="ChEBI" id="CHEBI:60377"/>
        <dbReference type="ChEBI" id="CHEBI:456216"/>
        <dbReference type="EC" id="2.7.1.48"/>
    </reaction>
</comment>
<comment type="pathway">
    <text evidence="1">Pyrimidine metabolism; CTP biosynthesis via salvage pathway; CTP from cytidine: step 1/3.</text>
</comment>
<comment type="pathway">
    <text evidence="1">Pyrimidine metabolism; UMP biosynthesis via salvage pathway; UMP from uridine: step 1/1.</text>
</comment>
<comment type="subcellular location">
    <subcellularLocation>
        <location evidence="1">Cytoplasm</location>
    </subcellularLocation>
</comment>
<comment type="similarity">
    <text evidence="1">Belongs to the uridine kinase family.</text>
</comment>
<organism>
    <name type="scientific">Salmonella schwarzengrund (strain CVM19633)</name>
    <dbReference type="NCBI Taxonomy" id="439843"/>
    <lineage>
        <taxon>Bacteria</taxon>
        <taxon>Pseudomonadati</taxon>
        <taxon>Pseudomonadota</taxon>
        <taxon>Gammaproteobacteria</taxon>
        <taxon>Enterobacterales</taxon>
        <taxon>Enterobacteriaceae</taxon>
        <taxon>Salmonella</taxon>
    </lineage>
</organism>
<gene>
    <name evidence="1" type="primary">udk</name>
    <name type="ordered locus">SeSA_A2356</name>
</gene>
<proteinExistence type="inferred from homology"/>
<dbReference type="EC" id="2.7.1.48" evidence="1"/>
<dbReference type="EMBL" id="CP001127">
    <property type="protein sequence ID" value="ACF91491.1"/>
    <property type="molecule type" value="Genomic_DNA"/>
</dbReference>
<dbReference type="RefSeq" id="WP_000132082.1">
    <property type="nucleotide sequence ID" value="NC_011094.1"/>
</dbReference>
<dbReference type="SMR" id="B4TNH9"/>
<dbReference type="GeneID" id="66756602"/>
<dbReference type="KEGG" id="sew:SeSA_A2356"/>
<dbReference type="HOGENOM" id="CLU_021278_1_2_6"/>
<dbReference type="UniPathway" id="UPA00574">
    <property type="reaction ID" value="UER00637"/>
</dbReference>
<dbReference type="UniPathway" id="UPA00579">
    <property type="reaction ID" value="UER00640"/>
</dbReference>
<dbReference type="Proteomes" id="UP000001865">
    <property type="component" value="Chromosome"/>
</dbReference>
<dbReference type="GO" id="GO:0005737">
    <property type="term" value="C:cytoplasm"/>
    <property type="evidence" value="ECO:0007669"/>
    <property type="project" value="UniProtKB-SubCell"/>
</dbReference>
<dbReference type="GO" id="GO:0005524">
    <property type="term" value="F:ATP binding"/>
    <property type="evidence" value="ECO:0007669"/>
    <property type="project" value="UniProtKB-UniRule"/>
</dbReference>
<dbReference type="GO" id="GO:0043771">
    <property type="term" value="F:cytidine kinase activity"/>
    <property type="evidence" value="ECO:0007669"/>
    <property type="project" value="RHEA"/>
</dbReference>
<dbReference type="GO" id="GO:0004849">
    <property type="term" value="F:uridine kinase activity"/>
    <property type="evidence" value="ECO:0007669"/>
    <property type="project" value="UniProtKB-UniRule"/>
</dbReference>
<dbReference type="GO" id="GO:0044211">
    <property type="term" value="P:CTP salvage"/>
    <property type="evidence" value="ECO:0007669"/>
    <property type="project" value="UniProtKB-UniRule"/>
</dbReference>
<dbReference type="GO" id="GO:0044206">
    <property type="term" value="P:UMP salvage"/>
    <property type="evidence" value="ECO:0007669"/>
    <property type="project" value="UniProtKB-UniRule"/>
</dbReference>
<dbReference type="CDD" id="cd02023">
    <property type="entry name" value="UMPK"/>
    <property type="match status" value="1"/>
</dbReference>
<dbReference type="FunFam" id="3.40.50.300:FF:000252">
    <property type="entry name" value="Uridine kinase"/>
    <property type="match status" value="1"/>
</dbReference>
<dbReference type="Gene3D" id="3.40.50.300">
    <property type="entry name" value="P-loop containing nucleotide triphosphate hydrolases"/>
    <property type="match status" value="1"/>
</dbReference>
<dbReference type="HAMAP" id="MF_00551">
    <property type="entry name" value="Uridine_kinase"/>
    <property type="match status" value="1"/>
</dbReference>
<dbReference type="InterPro" id="IPR027417">
    <property type="entry name" value="P-loop_NTPase"/>
</dbReference>
<dbReference type="InterPro" id="IPR006083">
    <property type="entry name" value="PRK/URK"/>
</dbReference>
<dbReference type="InterPro" id="IPR026008">
    <property type="entry name" value="Uridine_kinase"/>
</dbReference>
<dbReference type="InterPro" id="IPR000764">
    <property type="entry name" value="Uridine_kinase-like"/>
</dbReference>
<dbReference type="NCBIfam" id="NF004018">
    <property type="entry name" value="PRK05480.1"/>
    <property type="match status" value="1"/>
</dbReference>
<dbReference type="NCBIfam" id="TIGR00235">
    <property type="entry name" value="udk"/>
    <property type="match status" value="1"/>
</dbReference>
<dbReference type="PANTHER" id="PTHR10285">
    <property type="entry name" value="URIDINE KINASE"/>
    <property type="match status" value="1"/>
</dbReference>
<dbReference type="Pfam" id="PF00485">
    <property type="entry name" value="PRK"/>
    <property type="match status" value="1"/>
</dbReference>
<dbReference type="PRINTS" id="PR00988">
    <property type="entry name" value="URIDINKINASE"/>
</dbReference>
<dbReference type="SUPFAM" id="SSF52540">
    <property type="entry name" value="P-loop containing nucleoside triphosphate hydrolases"/>
    <property type="match status" value="1"/>
</dbReference>
<protein>
    <recommendedName>
        <fullName evidence="1">Uridine kinase</fullName>
        <ecNumber evidence="1">2.7.1.48</ecNumber>
    </recommendedName>
    <alternativeName>
        <fullName evidence="1">Cytidine monophosphokinase</fullName>
    </alternativeName>
    <alternativeName>
        <fullName evidence="1">Uridine monophosphokinase</fullName>
    </alternativeName>
</protein>